<dbReference type="EC" id="3.2.2.23" evidence="2"/>
<dbReference type="EC" id="4.2.99.18" evidence="2"/>
<dbReference type="EMBL" id="AP008232">
    <property type="protein sequence ID" value="BAE75481.1"/>
    <property type="molecule type" value="Genomic_DNA"/>
</dbReference>
<dbReference type="RefSeq" id="WP_011412017.1">
    <property type="nucleotide sequence ID" value="NC_007712.1"/>
</dbReference>
<dbReference type="SMR" id="Q2NQU4"/>
<dbReference type="STRING" id="343509.SG2206"/>
<dbReference type="KEGG" id="sgl:SG2206"/>
<dbReference type="eggNOG" id="COG0266">
    <property type="taxonomic scope" value="Bacteria"/>
</dbReference>
<dbReference type="HOGENOM" id="CLU_038423_1_1_6"/>
<dbReference type="OrthoDB" id="9800855at2"/>
<dbReference type="BioCyc" id="SGLO343509:SGP1_RS20300-MONOMER"/>
<dbReference type="Proteomes" id="UP000001932">
    <property type="component" value="Chromosome"/>
</dbReference>
<dbReference type="GO" id="GO:0034039">
    <property type="term" value="F:8-oxo-7,8-dihydroguanine DNA N-glycosylase activity"/>
    <property type="evidence" value="ECO:0007669"/>
    <property type="project" value="TreeGrafter"/>
</dbReference>
<dbReference type="GO" id="GO:0140078">
    <property type="term" value="F:class I DNA-(apurinic or apyrimidinic site) endonuclease activity"/>
    <property type="evidence" value="ECO:0007669"/>
    <property type="project" value="UniProtKB-EC"/>
</dbReference>
<dbReference type="GO" id="GO:0003684">
    <property type="term" value="F:damaged DNA binding"/>
    <property type="evidence" value="ECO:0007669"/>
    <property type="project" value="InterPro"/>
</dbReference>
<dbReference type="GO" id="GO:0008270">
    <property type="term" value="F:zinc ion binding"/>
    <property type="evidence" value="ECO:0007669"/>
    <property type="project" value="UniProtKB-UniRule"/>
</dbReference>
<dbReference type="GO" id="GO:0006284">
    <property type="term" value="P:base-excision repair"/>
    <property type="evidence" value="ECO:0007669"/>
    <property type="project" value="InterPro"/>
</dbReference>
<dbReference type="CDD" id="cd08966">
    <property type="entry name" value="EcFpg-like_N"/>
    <property type="match status" value="1"/>
</dbReference>
<dbReference type="FunFam" id="1.10.8.50:FF:000003">
    <property type="entry name" value="Formamidopyrimidine-DNA glycosylase"/>
    <property type="match status" value="1"/>
</dbReference>
<dbReference type="FunFam" id="3.20.190.10:FF:000001">
    <property type="entry name" value="Formamidopyrimidine-DNA glycosylase"/>
    <property type="match status" value="1"/>
</dbReference>
<dbReference type="Gene3D" id="1.10.8.50">
    <property type="match status" value="1"/>
</dbReference>
<dbReference type="Gene3D" id="3.20.190.10">
    <property type="entry name" value="MutM-like, N-terminal"/>
    <property type="match status" value="1"/>
</dbReference>
<dbReference type="HAMAP" id="MF_00103">
    <property type="entry name" value="Fapy_DNA_glycosyl"/>
    <property type="match status" value="1"/>
</dbReference>
<dbReference type="InterPro" id="IPR015886">
    <property type="entry name" value="DNA_glyclase/AP_lyase_DNA-bd"/>
</dbReference>
<dbReference type="InterPro" id="IPR015887">
    <property type="entry name" value="DNA_glyclase_Znf_dom_DNA_BS"/>
</dbReference>
<dbReference type="InterPro" id="IPR020629">
    <property type="entry name" value="Formamido-pyr_DNA_Glyclase"/>
</dbReference>
<dbReference type="InterPro" id="IPR012319">
    <property type="entry name" value="FPG_cat"/>
</dbReference>
<dbReference type="InterPro" id="IPR035937">
    <property type="entry name" value="MutM-like_N-ter"/>
</dbReference>
<dbReference type="InterPro" id="IPR010979">
    <property type="entry name" value="Ribosomal_uS13-like_H2TH"/>
</dbReference>
<dbReference type="InterPro" id="IPR000214">
    <property type="entry name" value="Znf_DNA_glyclase/AP_lyase"/>
</dbReference>
<dbReference type="InterPro" id="IPR010663">
    <property type="entry name" value="Znf_FPG/IleRS"/>
</dbReference>
<dbReference type="NCBIfam" id="TIGR00577">
    <property type="entry name" value="fpg"/>
    <property type="match status" value="1"/>
</dbReference>
<dbReference type="NCBIfam" id="NF002211">
    <property type="entry name" value="PRK01103.1"/>
    <property type="match status" value="1"/>
</dbReference>
<dbReference type="PANTHER" id="PTHR22993">
    <property type="entry name" value="FORMAMIDOPYRIMIDINE-DNA GLYCOSYLASE"/>
    <property type="match status" value="1"/>
</dbReference>
<dbReference type="PANTHER" id="PTHR22993:SF9">
    <property type="entry name" value="FORMAMIDOPYRIMIDINE-DNA GLYCOSYLASE"/>
    <property type="match status" value="1"/>
</dbReference>
<dbReference type="Pfam" id="PF01149">
    <property type="entry name" value="Fapy_DNA_glyco"/>
    <property type="match status" value="1"/>
</dbReference>
<dbReference type="Pfam" id="PF06831">
    <property type="entry name" value="H2TH"/>
    <property type="match status" value="1"/>
</dbReference>
<dbReference type="Pfam" id="PF06827">
    <property type="entry name" value="zf-FPG_IleRS"/>
    <property type="match status" value="1"/>
</dbReference>
<dbReference type="SMART" id="SM00898">
    <property type="entry name" value="Fapy_DNA_glyco"/>
    <property type="match status" value="1"/>
</dbReference>
<dbReference type="SMART" id="SM01232">
    <property type="entry name" value="H2TH"/>
    <property type="match status" value="1"/>
</dbReference>
<dbReference type="SUPFAM" id="SSF57716">
    <property type="entry name" value="Glucocorticoid receptor-like (DNA-binding domain)"/>
    <property type="match status" value="1"/>
</dbReference>
<dbReference type="SUPFAM" id="SSF81624">
    <property type="entry name" value="N-terminal domain of MutM-like DNA repair proteins"/>
    <property type="match status" value="1"/>
</dbReference>
<dbReference type="SUPFAM" id="SSF46946">
    <property type="entry name" value="S13-like H2TH domain"/>
    <property type="match status" value="1"/>
</dbReference>
<dbReference type="PROSITE" id="PS51068">
    <property type="entry name" value="FPG_CAT"/>
    <property type="match status" value="1"/>
</dbReference>
<dbReference type="PROSITE" id="PS01242">
    <property type="entry name" value="ZF_FPG_1"/>
    <property type="match status" value="1"/>
</dbReference>
<dbReference type="PROSITE" id="PS51066">
    <property type="entry name" value="ZF_FPG_2"/>
    <property type="match status" value="1"/>
</dbReference>
<gene>
    <name evidence="2" type="primary">mutM</name>
    <name evidence="2" type="synonym">fpg</name>
    <name type="ordered locus">SG2206</name>
</gene>
<proteinExistence type="inferred from homology"/>
<reference key="1">
    <citation type="journal article" date="2006" name="Genome Res.">
        <title>Massive genome erosion and functional adaptations provide insights into the symbiotic lifestyle of Sodalis glossinidius in the tsetse host.</title>
        <authorList>
            <person name="Toh H."/>
            <person name="Weiss B.L."/>
            <person name="Perkin S.A.H."/>
            <person name="Yamashita A."/>
            <person name="Oshima K."/>
            <person name="Hattori M."/>
            <person name="Aksoy S."/>
        </authorList>
    </citation>
    <scope>NUCLEOTIDE SEQUENCE [LARGE SCALE GENOMIC DNA]</scope>
    <source>
        <strain>morsitans</strain>
    </source>
</reference>
<sequence>MPELPEVETSRRGIEPWVAGQTILRAEVRNARLRWPVDEEIIALRDQRVLSVQRRAKYLLLELEKGWIIIHLGMSGRLRVLPQPQPPEKHDHVDLVIGNGCIIRYTDPRRFGAWLWSDDLRTSRALAHLGPEPLSDKFDGRWLYQKSHNKRTSIKPWLMDNTLVVGVGNIYASESLFVAGILPGRAAGSLSEEEAGLLAESIKAVLLRSIEQGGTTLRDFLQSDGKPGYFVQELQVYGRGGEPCRVCGTPIQMAKHGQRSTFFCPACQH</sequence>
<protein>
    <recommendedName>
        <fullName evidence="2">Formamidopyrimidine-DNA glycosylase</fullName>
        <shortName evidence="2">Fapy-DNA glycosylase</shortName>
        <ecNumber evidence="2">3.2.2.23</ecNumber>
    </recommendedName>
    <alternativeName>
        <fullName evidence="2">DNA-(apurinic or apyrimidinic site) lyase MutM</fullName>
        <shortName evidence="2">AP lyase MutM</shortName>
        <ecNumber evidence="2">4.2.99.18</ecNumber>
    </alternativeName>
</protein>
<accession>Q2NQU4</accession>
<feature type="initiator methionine" description="Removed" evidence="1">
    <location>
        <position position="1"/>
    </location>
</feature>
<feature type="chain" id="PRO_1000008781" description="Formamidopyrimidine-DNA glycosylase">
    <location>
        <begin position="2"/>
        <end position="269"/>
    </location>
</feature>
<feature type="zinc finger region" description="FPG-type" evidence="2">
    <location>
        <begin position="235"/>
        <end position="269"/>
    </location>
</feature>
<feature type="active site" description="Schiff-base intermediate with DNA" evidence="2">
    <location>
        <position position="2"/>
    </location>
</feature>
<feature type="active site" description="Proton donor" evidence="2">
    <location>
        <position position="3"/>
    </location>
</feature>
<feature type="active site" description="Proton donor; for beta-elimination activity" evidence="2">
    <location>
        <position position="57"/>
    </location>
</feature>
<feature type="active site" description="Proton donor; for delta-elimination activity" evidence="2">
    <location>
        <position position="259"/>
    </location>
</feature>
<feature type="binding site" evidence="2">
    <location>
        <position position="90"/>
    </location>
    <ligand>
        <name>DNA</name>
        <dbReference type="ChEBI" id="CHEBI:16991"/>
    </ligand>
</feature>
<feature type="binding site" evidence="2">
    <location>
        <position position="109"/>
    </location>
    <ligand>
        <name>DNA</name>
        <dbReference type="ChEBI" id="CHEBI:16991"/>
    </ligand>
</feature>
<feature type="binding site" evidence="2">
    <location>
        <position position="150"/>
    </location>
    <ligand>
        <name>DNA</name>
        <dbReference type="ChEBI" id="CHEBI:16991"/>
    </ligand>
</feature>
<comment type="function">
    <text evidence="2">Involved in base excision repair of DNA damaged by oxidation or by mutagenic agents. Acts as a DNA glycosylase that recognizes and removes damaged bases. Has a preference for oxidized purines, such as 7,8-dihydro-8-oxoguanine (8-oxoG). Has AP (apurinic/apyrimidinic) lyase activity and introduces nicks in the DNA strand. Cleaves the DNA backbone by beta-delta elimination to generate a single-strand break at the site of the removed base with both 3'- and 5'-phosphates.</text>
</comment>
<comment type="catalytic activity">
    <reaction evidence="2">
        <text>Hydrolysis of DNA containing ring-opened 7-methylguanine residues, releasing 2,6-diamino-4-hydroxy-5-(N-methyl)formamidopyrimidine.</text>
        <dbReference type="EC" id="3.2.2.23"/>
    </reaction>
</comment>
<comment type="catalytic activity">
    <reaction evidence="2">
        <text>2'-deoxyribonucleotide-(2'-deoxyribose 5'-phosphate)-2'-deoxyribonucleotide-DNA = a 3'-end 2'-deoxyribonucleotide-(2,3-dehydro-2,3-deoxyribose 5'-phosphate)-DNA + a 5'-end 5'-phospho-2'-deoxyribonucleoside-DNA + H(+)</text>
        <dbReference type="Rhea" id="RHEA:66592"/>
        <dbReference type="Rhea" id="RHEA-COMP:13180"/>
        <dbReference type="Rhea" id="RHEA-COMP:16897"/>
        <dbReference type="Rhea" id="RHEA-COMP:17067"/>
        <dbReference type="ChEBI" id="CHEBI:15378"/>
        <dbReference type="ChEBI" id="CHEBI:136412"/>
        <dbReference type="ChEBI" id="CHEBI:157695"/>
        <dbReference type="ChEBI" id="CHEBI:167181"/>
        <dbReference type="EC" id="4.2.99.18"/>
    </reaction>
</comment>
<comment type="cofactor">
    <cofactor evidence="2">
        <name>Zn(2+)</name>
        <dbReference type="ChEBI" id="CHEBI:29105"/>
    </cofactor>
    <text evidence="2">Binds 1 zinc ion per subunit.</text>
</comment>
<comment type="subunit">
    <text evidence="2">Monomer.</text>
</comment>
<comment type="similarity">
    <text evidence="2">Belongs to the FPG family.</text>
</comment>
<keyword id="KW-0227">DNA damage</keyword>
<keyword id="KW-0234">DNA repair</keyword>
<keyword id="KW-0238">DNA-binding</keyword>
<keyword id="KW-0326">Glycosidase</keyword>
<keyword id="KW-0378">Hydrolase</keyword>
<keyword id="KW-0456">Lyase</keyword>
<keyword id="KW-0479">Metal-binding</keyword>
<keyword id="KW-0511">Multifunctional enzyme</keyword>
<keyword id="KW-0862">Zinc</keyword>
<keyword id="KW-0863">Zinc-finger</keyword>
<evidence type="ECO:0000250" key="1"/>
<evidence type="ECO:0000255" key="2">
    <source>
        <dbReference type="HAMAP-Rule" id="MF_00103"/>
    </source>
</evidence>
<organism>
    <name type="scientific">Sodalis glossinidius (strain morsitans)</name>
    <dbReference type="NCBI Taxonomy" id="343509"/>
    <lineage>
        <taxon>Bacteria</taxon>
        <taxon>Pseudomonadati</taxon>
        <taxon>Pseudomonadota</taxon>
        <taxon>Gammaproteobacteria</taxon>
        <taxon>Enterobacterales</taxon>
        <taxon>Bruguierivoracaceae</taxon>
        <taxon>Sodalis</taxon>
    </lineage>
</organism>
<name>FPG_SODGM</name>